<reference key="1">
    <citation type="journal article" date="1998" name="Nature">
        <title>Deciphering the biology of Mycobacterium tuberculosis from the complete genome sequence.</title>
        <authorList>
            <person name="Cole S.T."/>
            <person name="Brosch R."/>
            <person name="Parkhill J."/>
            <person name="Garnier T."/>
            <person name="Churcher C.M."/>
            <person name="Harris D.E."/>
            <person name="Gordon S.V."/>
            <person name="Eiglmeier K."/>
            <person name="Gas S."/>
            <person name="Barry C.E. III"/>
            <person name="Tekaia F."/>
            <person name="Badcock K."/>
            <person name="Basham D."/>
            <person name="Brown D."/>
            <person name="Chillingworth T."/>
            <person name="Connor R."/>
            <person name="Davies R.M."/>
            <person name="Devlin K."/>
            <person name="Feltwell T."/>
            <person name="Gentles S."/>
            <person name="Hamlin N."/>
            <person name="Holroyd S."/>
            <person name="Hornsby T."/>
            <person name="Jagels K."/>
            <person name="Krogh A."/>
            <person name="McLean J."/>
            <person name="Moule S."/>
            <person name="Murphy L.D."/>
            <person name="Oliver S."/>
            <person name="Osborne J."/>
            <person name="Quail M.A."/>
            <person name="Rajandream M.A."/>
            <person name="Rogers J."/>
            <person name="Rutter S."/>
            <person name="Seeger K."/>
            <person name="Skelton S."/>
            <person name="Squares S."/>
            <person name="Squares R."/>
            <person name="Sulston J.E."/>
            <person name="Taylor K."/>
            <person name="Whitehead S."/>
            <person name="Barrell B.G."/>
        </authorList>
    </citation>
    <scope>NUCLEOTIDE SEQUENCE [LARGE SCALE GENOMIC DNA]</scope>
    <source>
        <strain>ATCC 25618 / H37Rv</strain>
    </source>
</reference>
<reference key="2">
    <citation type="journal article" date="2011" name="Mol. Cell. Proteomics">
        <title>Proteogenomic analysis of Mycobacterium tuberculosis by high resolution mass spectrometry.</title>
        <authorList>
            <person name="Kelkar D.S."/>
            <person name="Kumar D."/>
            <person name="Kumar P."/>
            <person name="Balakrishnan L."/>
            <person name="Muthusamy B."/>
            <person name="Yadav A.K."/>
            <person name="Shrivastava P."/>
            <person name="Marimuthu A."/>
            <person name="Anand S."/>
            <person name="Sundaram H."/>
            <person name="Kingsbury R."/>
            <person name="Harsha H.C."/>
            <person name="Nair B."/>
            <person name="Prasad T.S."/>
            <person name="Chauhan D.S."/>
            <person name="Katoch K."/>
            <person name="Katoch V.M."/>
            <person name="Kumar P."/>
            <person name="Chaerkady R."/>
            <person name="Ramachandran S."/>
            <person name="Dash D."/>
            <person name="Pandey A."/>
        </authorList>
    </citation>
    <scope>IDENTIFICATION BY MASS SPECTROMETRY [LARGE SCALE ANALYSIS]</scope>
    <source>
        <strain>ATCC 25618 / H37Rv</strain>
    </source>
</reference>
<dbReference type="EC" id="1.1.-.-"/>
<dbReference type="EMBL" id="AL123456">
    <property type="protein sequence ID" value="CCP43517.1"/>
    <property type="molecule type" value="Genomic_DNA"/>
</dbReference>
<dbReference type="PIR" id="E70707">
    <property type="entry name" value="E70707"/>
</dbReference>
<dbReference type="RefSeq" id="NP_215284.1">
    <property type="nucleotide sequence ID" value="NC_000962.3"/>
</dbReference>
<dbReference type="RefSeq" id="WP_003403924.1">
    <property type="nucleotide sequence ID" value="NZ_NVQJ01000035.1"/>
</dbReference>
<dbReference type="SMR" id="P9WNY3"/>
<dbReference type="STRING" id="83332.Rv0770"/>
<dbReference type="PaxDb" id="83332-Rv0770"/>
<dbReference type="DNASU" id="888868"/>
<dbReference type="GeneID" id="888868"/>
<dbReference type="KEGG" id="mtu:Rv0770"/>
<dbReference type="KEGG" id="mtv:RVBD_0770"/>
<dbReference type="TubercuList" id="Rv0770"/>
<dbReference type="eggNOG" id="COG2084">
    <property type="taxonomic scope" value="Bacteria"/>
</dbReference>
<dbReference type="InParanoid" id="P9WNY3"/>
<dbReference type="OrthoDB" id="3185659at2"/>
<dbReference type="PhylomeDB" id="P9WNY3"/>
<dbReference type="Proteomes" id="UP000001584">
    <property type="component" value="Chromosome"/>
</dbReference>
<dbReference type="GO" id="GO:0051287">
    <property type="term" value="F:NAD binding"/>
    <property type="evidence" value="ECO:0007669"/>
    <property type="project" value="InterPro"/>
</dbReference>
<dbReference type="GO" id="GO:0050661">
    <property type="term" value="F:NADP binding"/>
    <property type="evidence" value="ECO:0007669"/>
    <property type="project" value="InterPro"/>
</dbReference>
<dbReference type="GO" id="GO:0016491">
    <property type="term" value="F:oxidoreductase activity"/>
    <property type="evidence" value="ECO:0007669"/>
    <property type="project" value="UniProtKB-KW"/>
</dbReference>
<dbReference type="GO" id="GO:0016054">
    <property type="term" value="P:organic acid catabolic process"/>
    <property type="evidence" value="ECO:0007669"/>
    <property type="project" value="UniProtKB-ARBA"/>
</dbReference>
<dbReference type="Gene3D" id="1.10.1040.10">
    <property type="entry name" value="N-(1-d-carboxylethyl)-l-norvaline Dehydrogenase, domain 2"/>
    <property type="match status" value="1"/>
</dbReference>
<dbReference type="Gene3D" id="3.40.50.720">
    <property type="entry name" value="NAD(P)-binding Rossmann-like Domain"/>
    <property type="match status" value="1"/>
</dbReference>
<dbReference type="InterPro" id="IPR002204">
    <property type="entry name" value="3-OH-isobutyrate_DH-rel_CS"/>
</dbReference>
<dbReference type="InterPro" id="IPR008927">
    <property type="entry name" value="6-PGluconate_DH-like_C_sf"/>
</dbReference>
<dbReference type="InterPro" id="IPR013328">
    <property type="entry name" value="6PGD_dom2"/>
</dbReference>
<dbReference type="InterPro" id="IPR006115">
    <property type="entry name" value="6PGDH_NADP-bd"/>
</dbReference>
<dbReference type="InterPro" id="IPR029154">
    <property type="entry name" value="HIBADH-like_NADP-bd"/>
</dbReference>
<dbReference type="InterPro" id="IPR015815">
    <property type="entry name" value="HIBADH-related"/>
</dbReference>
<dbReference type="InterPro" id="IPR036291">
    <property type="entry name" value="NAD(P)-bd_dom_sf"/>
</dbReference>
<dbReference type="PANTHER" id="PTHR43060">
    <property type="entry name" value="3-HYDROXYISOBUTYRATE DEHYDROGENASE-LIKE 1, MITOCHONDRIAL-RELATED"/>
    <property type="match status" value="1"/>
</dbReference>
<dbReference type="PANTHER" id="PTHR43060:SF15">
    <property type="entry name" value="3-HYDROXYISOBUTYRATE DEHYDROGENASE-LIKE 1, MITOCHONDRIAL-RELATED"/>
    <property type="match status" value="1"/>
</dbReference>
<dbReference type="Pfam" id="PF14833">
    <property type="entry name" value="NAD_binding_11"/>
    <property type="match status" value="1"/>
</dbReference>
<dbReference type="Pfam" id="PF03446">
    <property type="entry name" value="NAD_binding_2"/>
    <property type="match status" value="1"/>
</dbReference>
<dbReference type="PIRSF" id="PIRSF000103">
    <property type="entry name" value="HIBADH"/>
    <property type="match status" value="1"/>
</dbReference>
<dbReference type="SUPFAM" id="SSF48179">
    <property type="entry name" value="6-phosphogluconate dehydrogenase C-terminal domain-like"/>
    <property type="match status" value="1"/>
</dbReference>
<dbReference type="SUPFAM" id="SSF51735">
    <property type="entry name" value="NAD(P)-binding Rossmann-fold domains"/>
    <property type="match status" value="1"/>
</dbReference>
<dbReference type="PROSITE" id="PS00895">
    <property type="entry name" value="3_HYDROXYISOBUT_DH"/>
    <property type="match status" value="1"/>
</dbReference>
<proteinExistence type="evidence at protein level"/>
<keyword id="KW-0520">NAD</keyword>
<keyword id="KW-0560">Oxidoreductase</keyword>
<keyword id="KW-1185">Reference proteome</keyword>
<protein>
    <recommendedName>
        <fullName>Uncharacterized oxidoreductase Rv0770</fullName>
        <ecNumber>1.1.-.-</ecNumber>
    </recommendedName>
</protein>
<accession>P9WNY3</accession>
<accession>L0T7N9</accession>
<accession>P71825</accession>
<organism>
    <name type="scientific">Mycobacterium tuberculosis (strain ATCC 25618 / H37Rv)</name>
    <dbReference type="NCBI Taxonomy" id="83332"/>
    <lineage>
        <taxon>Bacteria</taxon>
        <taxon>Bacillati</taxon>
        <taxon>Actinomycetota</taxon>
        <taxon>Actinomycetes</taxon>
        <taxon>Mycobacteriales</taxon>
        <taxon>Mycobacteriaceae</taxon>
        <taxon>Mycobacterium</taxon>
        <taxon>Mycobacterium tuberculosis complex</taxon>
    </lineage>
</organism>
<name>Y770_MYCTU</name>
<evidence type="ECO:0000250" key="1"/>
<evidence type="ECO:0000305" key="2"/>
<sequence length="295" mass="30446">MTAHPETPRLGYIGLGNQGAPMAKRLLDWPGGLTVFDVRVEAMAPFVEGGATAAASVSDVAEADIISITVFDDAQVSSVITADNGLATHAKPGTIVAIHSTIADTTAVDLAEKLKPQGIHIVDAPVSGGAAAAAKGELAVMVGADDEAFQRIKEPFSRWASLLIHAGEPGAGTRMKLARNMLTFVSYAAAAEAQRLAEACGLDLVALGKVVRHSDSFTGGAGAIMFRNTTAPMEPADPLRPLLEHTRGLGEKDLSLALALGEVVSVDLPLAQLALQRLAAGLGVPHPDTEPAKET</sequence>
<gene>
    <name type="ordered locus">Rv0770</name>
    <name type="ORF">MTCY369.15</name>
</gene>
<feature type="chain" id="PRO_0000173069" description="Uncharacterized oxidoreductase Rv0770">
    <location>
        <begin position="1"/>
        <end position="295"/>
    </location>
</feature>
<feature type="active site" evidence="1">
    <location>
        <position position="176"/>
    </location>
</feature>
<feature type="binding site" evidence="1">
    <location>
        <begin position="11"/>
        <end position="25"/>
    </location>
    <ligand>
        <name>NAD(+)</name>
        <dbReference type="ChEBI" id="CHEBI:57540"/>
    </ligand>
</feature>
<feature type="binding site" evidence="1">
    <location>
        <position position="101"/>
    </location>
    <ligand>
        <name>NAD(+)</name>
        <dbReference type="ChEBI" id="CHEBI:57540"/>
    </ligand>
</feature>
<feature type="binding site" evidence="1">
    <location>
        <position position="252"/>
    </location>
    <ligand>
        <name>NAD(+)</name>
        <dbReference type="ChEBI" id="CHEBI:57540"/>
    </ligand>
</feature>
<comment type="similarity">
    <text evidence="2">Belongs to the HIBADH-related family.</text>
</comment>